<keyword id="KW-0997">Cell inner membrane</keyword>
<keyword id="KW-1003">Cell membrane</keyword>
<keyword id="KW-0472">Membrane</keyword>
<keyword id="KW-0762">Sugar transport</keyword>
<keyword id="KW-0769">Symport</keyword>
<keyword id="KW-0812">Transmembrane</keyword>
<keyword id="KW-1133">Transmembrane helix</keyword>
<keyword id="KW-0813">Transport</keyword>
<sequence length="344" mass="37458">MSNPILLGIFWHFIGAASAACFYAPFKQVKNWSWETMWSLGGFFSWIILPWCISWWLLPDFWRYYGSFDMATLLPIFLFGAMWGIGNINYGLTMRYLSMSMGIGIAIGVTLIIGTLMTPVLQGKFSVLFGSAGGRMTLLGVLVAVIGVAIVSYAGLLKERVLGIRAEEFNLKKGLILAVMCGIFSAGMSFAMDAAKPMHAAAQAQGINALYVALPSYVVIMGGGAVVNLGFCFMRLATCKGISLKADLAQAKPLLIANALFAILGGVMWYLQFFFYAWGHANIPADYTYISWMLHMSFYVLCGGIVGLLFKEWKSVGQKPVRTLVLGCMVIILAANVVGLGMAA</sequence>
<feature type="chain" id="PRO_1000215401" description="L-rhamnose-proton symporter">
    <location>
        <begin position="1"/>
        <end position="344"/>
    </location>
</feature>
<feature type="transmembrane region" description="Helical" evidence="1">
    <location>
        <begin position="4"/>
        <end position="24"/>
    </location>
</feature>
<feature type="transmembrane region" description="Helical" evidence="1">
    <location>
        <begin position="38"/>
        <end position="58"/>
    </location>
</feature>
<feature type="transmembrane region" description="Helical" evidence="1">
    <location>
        <begin position="68"/>
        <end position="88"/>
    </location>
</feature>
<feature type="transmembrane region" description="Helical" evidence="1">
    <location>
        <begin position="101"/>
        <end position="121"/>
    </location>
</feature>
<feature type="transmembrane region" description="Helical" evidence="1">
    <location>
        <begin position="137"/>
        <end position="157"/>
    </location>
</feature>
<feature type="transmembrane region" description="Helical" evidence="1">
    <location>
        <begin position="175"/>
        <end position="195"/>
    </location>
</feature>
<feature type="transmembrane region" description="Helical" evidence="1">
    <location>
        <begin position="207"/>
        <end position="227"/>
    </location>
</feature>
<feature type="transmembrane region" description="Helical" evidence="1">
    <location>
        <begin position="255"/>
        <end position="275"/>
    </location>
</feature>
<feature type="transmembrane region" description="Helical" evidence="1">
    <location>
        <begin position="290"/>
        <end position="310"/>
    </location>
</feature>
<feature type="transmembrane region" description="Helical" evidence="1">
    <location>
        <begin position="324"/>
        <end position="344"/>
    </location>
</feature>
<accession>C6DJS3</accession>
<organism>
    <name type="scientific">Pectobacterium carotovorum subsp. carotovorum (strain PC1)</name>
    <dbReference type="NCBI Taxonomy" id="561230"/>
    <lineage>
        <taxon>Bacteria</taxon>
        <taxon>Pseudomonadati</taxon>
        <taxon>Pseudomonadota</taxon>
        <taxon>Gammaproteobacteria</taxon>
        <taxon>Enterobacterales</taxon>
        <taxon>Pectobacteriaceae</taxon>
        <taxon>Pectobacterium</taxon>
    </lineage>
</organism>
<proteinExistence type="inferred from homology"/>
<dbReference type="EMBL" id="CP001657">
    <property type="protein sequence ID" value="ACT11486.1"/>
    <property type="molecule type" value="Genomic_DNA"/>
</dbReference>
<dbReference type="RefSeq" id="WP_012773141.1">
    <property type="nucleotide sequence ID" value="NC_012917.1"/>
</dbReference>
<dbReference type="STRING" id="561230.PC1_0430"/>
<dbReference type="KEGG" id="pct:PC1_0430"/>
<dbReference type="eggNOG" id="ENOG502Z7ID">
    <property type="taxonomic scope" value="Bacteria"/>
</dbReference>
<dbReference type="HOGENOM" id="CLU_066437_0_0_6"/>
<dbReference type="OrthoDB" id="9790043at2"/>
<dbReference type="Proteomes" id="UP000002736">
    <property type="component" value="Chromosome"/>
</dbReference>
<dbReference type="GO" id="GO:0005886">
    <property type="term" value="C:plasma membrane"/>
    <property type="evidence" value="ECO:0007669"/>
    <property type="project" value="UniProtKB-SubCell"/>
</dbReference>
<dbReference type="GO" id="GO:0015153">
    <property type="term" value="F:rhamnose transmembrane transporter activity"/>
    <property type="evidence" value="ECO:0007669"/>
    <property type="project" value="UniProtKB-UniRule"/>
</dbReference>
<dbReference type="GO" id="GO:0015293">
    <property type="term" value="F:symporter activity"/>
    <property type="evidence" value="ECO:0007669"/>
    <property type="project" value="UniProtKB-KW"/>
</dbReference>
<dbReference type="HAMAP" id="MF_01532">
    <property type="entry name" value="RhaT"/>
    <property type="match status" value="1"/>
</dbReference>
<dbReference type="InterPro" id="IPR004673">
    <property type="entry name" value="L-rhamnose-proton_sym_RhaT"/>
</dbReference>
<dbReference type="NCBIfam" id="NF010021">
    <property type="entry name" value="PRK13499.1-1"/>
    <property type="match status" value="1"/>
</dbReference>
<dbReference type="NCBIfam" id="NF010023">
    <property type="entry name" value="PRK13499.1-3"/>
    <property type="match status" value="1"/>
</dbReference>
<dbReference type="Pfam" id="PF06379">
    <property type="entry name" value="RhaT"/>
    <property type="match status" value="1"/>
</dbReference>
<protein>
    <recommendedName>
        <fullName evidence="1">L-rhamnose-proton symporter</fullName>
    </recommendedName>
    <alternativeName>
        <fullName evidence="1">L-rhamnose-H(+) transport protein</fullName>
    </alternativeName>
</protein>
<evidence type="ECO:0000255" key="1">
    <source>
        <dbReference type="HAMAP-Rule" id="MF_01532"/>
    </source>
</evidence>
<reference key="1">
    <citation type="submission" date="2009-07" db="EMBL/GenBank/DDBJ databases">
        <title>Complete sequence of Pectobacterium carotovorum subsp. carotovorum PC1.</title>
        <authorList>
            <consortium name="US DOE Joint Genome Institute"/>
            <person name="Lucas S."/>
            <person name="Copeland A."/>
            <person name="Lapidus A."/>
            <person name="Glavina del Rio T."/>
            <person name="Tice H."/>
            <person name="Bruce D."/>
            <person name="Goodwin L."/>
            <person name="Pitluck S."/>
            <person name="Munk A.C."/>
            <person name="Brettin T."/>
            <person name="Detter J.C."/>
            <person name="Han C."/>
            <person name="Tapia R."/>
            <person name="Larimer F."/>
            <person name="Land M."/>
            <person name="Hauser L."/>
            <person name="Kyrpides N."/>
            <person name="Mikhailova N."/>
            <person name="Balakrishnan V."/>
            <person name="Glasner J."/>
            <person name="Perna N.T."/>
        </authorList>
    </citation>
    <scope>NUCLEOTIDE SEQUENCE [LARGE SCALE GENOMIC DNA]</scope>
    <source>
        <strain>PC1</strain>
    </source>
</reference>
<gene>
    <name evidence="1" type="primary">rhaT</name>
    <name type="ordered locus">PC1_0430</name>
</gene>
<comment type="function">
    <text evidence="1">Uptake of L-rhamnose across the cytoplasmic membrane with the concomitant transport of protons into the cell (symport system).</text>
</comment>
<comment type="catalytic activity">
    <reaction evidence="1">
        <text>L-rhamnopyranose(in) + H(+)(in) = L-rhamnopyranose(out) + H(+)(out)</text>
        <dbReference type="Rhea" id="RHEA:29947"/>
        <dbReference type="ChEBI" id="CHEBI:15378"/>
        <dbReference type="ChEBI" id="CHEBI:62346"/>
    </reaction>
    <physiologicalReaction direction="right-to-left" evidence="1">
        <dbReference type="Rhea" id="RHEA:29949"/>
    </physiologicalReaction>
</comment>
<comment type="subcellular location">
    <subcellularLocation>
        <location evidence="1">Cell inner membrane</location>
        <topology evidence="1">Multi-pass membrane protein</topology>
    </subcellularLocation>
</comment>
<comment type="similarity">
    <text evidence="1">Belongs to the L-rhamnose transporter (TC 2.A.7.6) family.</text>
</comment>
<name>RHAT_PECCP</name>